<proteinExistence type="inferred from homology"/>
<reference key="1">
    <citation type="journal article" date="2002" name="Proc. Natl. Acad. Sci. U.S.A.">
        <title>Extensive mosaic structure revealed by the complete genome sequence of uropathogenic Escherichia coli.</title>
        <authorList>
            <person name="Welch R.A."/>
            <person name="Burland V."/>
            <person name="Plunkett G. III"/>
            <person name="Redford P."/>
            <person name="Roesch P."/>
            <person name="Rasko D."/>
            <person name="Buckles E.L."/>
            <person name="Liou S.-R."/>
            <person name="Boutin A."/>
            <person name="Hackett J."/>
            <person name="Stroud D."/>
            <person name="Mayhew G.F."/>
            <person name="Rose D.J."/>
            <person name="Zhou S."/>
            <person name="Schwartz D.C."/>
            <person name="Perna N.T."/>
            <person name="Mobley H.L.T."/>
            <person name="Donnenberg M.S."/>
            <person name="Blattner F.R."/>
        </authorList>
    </citation>
    <scope>NUCLEOTIDE SEQUENCE [LARGE SCALE GENOMIC DNA]</scope>
    <source>
        <strain>CFT073 / ATCC 700928 / UPEC</strain>
    </source>
</reference>
<organism>
    <name type="scientific">Escherichia coli O6:H1 (strain CFT073 / ATCC 700928 / UPEC)</name>
    <dbReference type="NCBI Taxonomy" id="199310"/>
    <lineage>
        <taxon>Bacteria</taxon>
        <taxon>Pseudomonadati</taxon>
        <taxon>Pseudomonadota</taxon>
        <taxon>Gammaproteobacteria</taxon>
        <taxon>Enterobacterales</taxon>
        <taxon>Enterobacteriaceae</taxon>
        <taxon>Escherichia</taxon>
    </lineage>
</organism>
<comment type="function">
    <text evidence="1">Catalyzes the attachment of threonine to tRNA(Thr) in a two-step reaction: L-threonine is first activated by ATP to form Thr-AMP and then transferred to the acceptor end of tRNA(Thr). Also edits incorrectly charged L-seryl-tRNA(Thr).</text>
</comment>
<comment type="catalytic activity">
    <reaction evidence="1">
        <text>tRNA(Thr) + L-threonine + ATP = L-threonyl-tRNA(Thr) + AMP + diphosphate + H(+)</text>
        <dbReference type="Rhea" id="RHEA:24624"/>
        <dbReference type="Rhea" id="RHEA-COMP:9670"/>
        <dbReference type="Rhea" id="RHEA-COMP:9704"/>
        <dbReference type="ChEBI" id="CHEBI:15378"/>
        <dbReference type="ChEBI" id="CHEBI:30616"/>
        <dbReference type="ChEBI" id="CHEBI:33019"/>
        <dbReference type="ChEBI" id="CHEBI:57926"/>
        <dbReference type="ChEBI" id="CHEBI:78442"/>
        <dbReference type="ChEBI" id="CHEBI:78534"/>
        <dbReference type="ChEBI" id="CHEBI:456215"/>
        <dbReference type="EC" id="6.1.1.3"/>
    </reaction>
</comment>
<comment type="cofactor">
    <cofactor evidence="1">
        <name>Zn(2+)</name>
        <dbReference type="ChEBI" id="CHEBI:29105"/>
    </cofactor>
    <text evidence="1">Binds 1 zinc ion per subunit.</text>
</comment>
<comment type="subunit">
    <text evidence="1">Homodimer.</text>
</comment>
<comment type="subcellular location">
    <subcellularLocation>
        <location evidence="1">Cytoplasm</location>
    </subcellularLocation>
</comment>
<comment type="similarity">
    <text evidence="1">Belongs to the class-II aminoacyl-tRNA synthetase family.</text>
</comment>
<evidence type="ECO:0000255" key="1">
    <source>
        <dbReference type="HAMAP-Rule" id="MF_00184"/>
    </source>
</evidence>
<evidence type="ECO:0000255" key="2">
    <source>
        <dbReference type="PROSITE-ProRule" id="PRU01228"/>
    </source>
</evidence>
<protein>
    <recommendedName>
        <fullName evidence="1">Threonine--tRNA ligase</fullName>
        <ecNumber evidence="1">6.1.1.3</ecNumber>
    </recommendedName>
    <alternativeName>
        <fullName evidence="1">Threonyl-tRNA synthetase</fullName>
        <shortName evidence="1">ThrRS</shortName>
    </alternativeName>
</protein>
<feature type="chain" id="PRO_0000100974" description="Threonine--tRNA ligase">
    <location>
        <begin position="1"/>
        <end position="642"/>
    </location>
</feature>
<feature type="domain" description="TGS" evidence="2">
    <location>
        <begin position="1"/>
        <end position="61"/>
    </location>
</feature>
<feature type="region of interest" description="Catalytic" evidence="1">
    <location>
        <begin position="243"/>
        <end position="534"/>
    </location>
</feature>
<feature type="binding site" evidence="1">
    <location>
        <position position="334"/>
    </location>
    <ligand>
        <name>Zn(2+)</name>
        <dbReference type="ChEBI" id="CHEBI:29105"/>
    </ligand>
</feature>
<feature type="binding site" evidence="1">
    <location>
        <position position="385"/>
    </location>
    <ligand>
        <name>Zn(2+)</name>
        <dbReference type="ChEBI" id="CHEBI:29105"/>
    </ligand>
</feature>
<feature type="binding site" evidence="1">
    <location>
        <position position="511"/>
    </location>
    <ligand>
        <name>Zn(2+)</name>
        <dbReference type="ChEBI" id="CHEBI:29105"/>
    </ligand>
</feature>
<feature type="modified residue" description="N6-acetyllysine" evidence="1">
    <location>
        <position position="286"/>
    </location>
</feature>
<keyword id="KW-0007">Acetylation</keyword>
<keyword id="KW-0030">Aminoacyl-tRNA synthetase</keyword>
<keyword id="KW-0067">ATP-binding</keyword>
<keyword id="KW-0963">Cytoplasm</keyword>
<keyword id="KW-0436">Ligase</keyword>
<keyword id="KW-0479">Metal-binding</keyword>
<keyword id="KW-0547">Nucleotide-binding</keyword>
<keyword id="KW-0648">Protein biosynthesis</keyword>
<keyword id="KW-1185">Reference proteome</keyword>
<keyword id="KW-0694">RNA-binding</keyword>
<keyword id="KW-0820">tRNA-binding</keyword>
<keyword id="KW-0862">Zinc</keyword>
<dbReference type="EC" id="6.1.1.3" evidence="1"/>
<dbReference type="EMBL" id="AE014075">
    <property type="protein sequence ID" value="AAN80575.1"/>
    <property type="molecule type" value="Genomic_DNA"/>
</dbReference>
<dbReference type="RefSeq" id="WP_001144202.1">
    <property type="nucleotide sequence ID" value="NZ_CP051263.1"/>
</dbReference>
<dbReference type="SMR" id="P0A8M4"/>
<dbReference type="STRING" id="199310.c2116"/>
<dbReference type="GeneID" id="93775932"/>
<dbReference type="KEGG" id="ecc:c2116"/>
<dbReference type="eggNOG" id="COG0441">
    <property type="taxonomic scope" value="Bacteria"/>
</dbReference>
<dbReference type="HOGENOM" id="CLU_008554_0_1_6"/>
<dbReference type="BioCyc" id="ECOL199310:C2116-MONOMER"/>
<dbReference type="SABIO-RK" id="P0A8M4"/>
<dbReference type="Proteomes" id="UP000001410">
    <property type="component" value="Chromosome"/>
</dbReference>
<dbReference type="GO" id="GO:0005829">
    <property type="term" value="C:cytosol"/>
    <property type="evidence" value="ECO:0007669"/>
    <property type="project" value="TreeGrafter"/>
</dbReference>
<dbReference type="GO" id="GO:0005524">
    <property type="term" value="F:ATP binding"/>
    <property type="evidence" value="ECO:0007669"/>
    <property type="project" value="UniProtKB-UniRule"/>
</dbReference>
<dbReference type="GO" id="GO:0046872">
    <property type="term" value="F:metal ion binding"/>
    <property type="evidence" value="ECO:0007669"/>
    <property type="project" value="UniProtKB-KW"/>
</dbReference>
<dbReference type="GO" id="GO:0004829">
    <property type="term" value="F:threonine-tRNA ligase activity"/>
    <property type="evidence" value="ECO:0007669"/>
    <property type="project" value="UniProtKB-UniRule"/>
</dbReference>
<dbReference type="GO" id="GO:0000049">
    <property type="term" value="F:tRNA binding"/>
    <property type="evidence" value="ECO:0007669"/>
    <property type="project" value="UniProtKB-KW"/>
</dbReference>
<dbReference type="GO" id="GO:0006435">
    <property type="term" value="P:threonyl-tRNA aminoacylation"/>
    <property type="evidence" value="ECO:0007669"/>
    <property type="project" value="UniProtKB-UniRule"/>
</dbReference>
<dbReference type="CDD" id="cd01667">
    <property type="entry name" value="TGS_ThrRS"/>
    <property type="match status" value="1"/>
</dbReference>
<dbReference type="CDD" id="cd00860">
    <property type="entry name" value="ThrRS_anticodon"/>
    <property type="match status" value="1"/>
</dbReference>
<dbReference type="CDD" id="cd00771">
    <property type="entry name" value="ThrRS_core"/>
    <property type="match status" value="1"/>
</dbReference>
<dbReference type="FunFam" id="3.10.20.30:FF:000005">
    <property type="entry name" value="Threonine--tRNA ligase"/>
    <property type="match status" value="1"/>
</dbReference>
<dbReference type="FunFam" id="3.30.54.20:FF:000002">
    <property type="entry name" value="Threonine--tRNA ligase"/>
    <property type="match status" value="1"/>
</dbReference>
<dbReference type="FunFam" id="3.30.930.10:FF:000002">
    <property type="entry name" value="Threonine--tRNA ligase"/>
    <property type="match status" value="1"/>
</dbReference>
<dbReference type="FunFam" id="3.40.50.800:FF:000001">
    <property type="entry name" value="Threonine--tRNA ligase"/>
    <property type="match status" value="1"/>
</dbReference>
<dbReference type="FunFam" id="3.30.980.10:FF:000005">
    <property type="entry name" value="Threonyl-tRNA synthetase, mitochondrial"/>
    <property type="match status" value="1"/>
</dbReference>
<dbReference type="Gene3D" id="3.10.20.30">
    <property type="match status" value="1"/>
</dbReference>
<dbReference type="Gene3D" id="3.30.54.20">
    <property type="match status" value="1"/>
</dbReference>
<dbReference type="Gene3D" id="3.40.50.800">
    <property type="entry name" value="Anticodon-binding domain"/>
    <property type="match status" value="1"/>
</dbReference>
<dbReference type="Gene3D" id="3.30.930.10">
    <property type="entry name" value="Bira Bifunctional Protein, Domain 2"/>
    <property type="match status" value="1"/>
</dbReference>
<dbReference type="Gene3D" id="3.30.980.10">
    <property type="entry name" value="Threonyl-trna Synthetase, Chain A, domain 2"/>
    <property type="match status" value="1"/>
</dbReference>
<dbReference type="HAMAP" id="MF_00184">
    <property type="entry name" value="Thr_tRNA_synth"/>
    <property type="match status" value="1"/>
</dbReference>
<dbReference type="InterPro" id="IPR002314">
    <property type="entry name" value="aa-tRNA-synt_IIb"/>
</dbReference>
<dbReference type="InterPro" id="IPR006195">
    <property type="entry name" value="aa-tRNA-synth_II"/>
</dbReference>
<dbReference type="InterPro" id="IPR045864">
    <property type="entry name" value="aa-tRNA-synth_II/BPL/LPL"/>
</dbReference>
<dbReference type="InterPro" id="IPR004154">
    <property type="entry name" value="Anticodon-bd"/>
</dbReference>
<dbReference type="InterPro" id="IPR036621">
    <property type="entry name" value="Anticodon-bd_dom_sf"/>
</dbReference>
<dbReference type="InterPro" id="IPR012675">
    <property type="entry name" value="Beta-grasp_dom_sf"/>
</dbReference>
<dbReference type="InterPro" id="IPR004095">
    <property type="entry name" value="TGS"/>
</dbReference>
<dbReference type="InterPro" id="IPR012676">
    <property type="entry name" value="TGS-like"/>
</dbReference>
<dbReference type="InterPro" id="IPR002320">
    <property type="entry name" value="Thr-tRNA-ligase_IIa"/>
</dbReference>
<dbReference type="InterPro" id="IPR018163">
    <property type="entry name" value="Thr/Ala-tRNA-synth_IIc_edit"/>
</dbReference>
<dbReference type="InterPro" id="IPR047246">
    <property type="entry name" value="ThrRS_anticodon"/>
</dbReference>
<dbReference type="InterPro" id="IPR033728">
    <property type="entry name" value="ThrRS_core"/>
</dbReference>
<dbReference type="InterPro" id="IPR012947">
    <property type="entry name" value="tRNA_SAD"/>
</dbReference>
<dbReference type="NCBIfam" id="TIGR00418">
    <property type="entry name" value="thrS"/>
    <property type="match status" value="1"/>
</dbReference>
<dbReference type="PANTHER" id="PTHR11451:SF44">
    <property type="entry name" value="THREONINE--TRNA LIGASE, CHLOROPLASTIC_MITOCHONDRIAL 2"/>
    <property type="match status" value="1"/>
</dbReference>
<dbReference type="PANTHER" id="PTHR11451">
    <property type="entry name" value="THREONINE-TRNA LIGASE"/>
    <property type="match status" value="1"/>
</dbReference>
<dbReference type="Pfam" id="PF03129">
    <property type="entry name" value="HGTP_anticodon"/>
    <property type="match status" value="1"/>
</dbReference>
<dbReference type="Pfam" id="PF02824">
    <property type="entry name" value="TGS"/>
    <property type="match status" value="1"/>
</dbReference>
<dbReference type="Pfam" id="PF00587">
    <property type="entry name" value="tRNA-synt_2b"/>
    <property type="match status" value="1"/>
</dbReference>
<dbReference type="Pfam" id="PF07973">
    <property type="entry name" value="tRNA_SAD"/>
    <property type="match status" value="1"/>
</dbReference>
<dbReference type="PRINTS" id="PR01047">
    <property type="entry name" value="TRNASYNTHTHR"/>
</dbReference>
<dbReference type="SMART" id="SM00863">
    <property type="entry name" value="tRNA_SAD"/>
    <property type="match status" value="1"/>
</dbReference>
<dbReference type="SUPFAM" id="SSF52954">
    <property type="entry name" value="Class II aaRS ABD-related"/>
    <property type="match status" value="1"/>
</dbReference>
<dbReference type="SUPFAM" id="SSF55681">
    <property type="entry name" value="Class II aaRS and biotin synthetases"/>
    <property type="match status" value="1"/>
</dbReference>
<dbReference type="SUPFAM" id="SSF81271">
    <property type="entry name" value="TGS-like"/>
    <property type="match status" value="1"/>
</dbReference>
<dbReference type="SUPFAM" id="SSF55186">
    <property type="entry name" value="ThrRS/AlaRS common domain"/>
    <property type="match status" value="1"/>
</dbReference>
<dbReference type="PROSITE" id="PS50862">
    <property type="entry name" value="AA_TRNA_LIGASE_II"/>
    <property type="match status" value="1"/>
</dbReference>
<dbReference type="PROSITE" id="PS51880">
    <property type="entry name" value="TGS"/>
    <property type="match status" value="1"/>
</dbReference>
<accession>P0A8M4</accession>
<accession>P00955</accession>
<accession>P78166</accession>
<accession>P78241</accession>
<sequence>MPVITLPDGSQRHYDHAVSPMDVALDIGPGLAKACIAGRVNGELVDACDLIENDAQLSIITAKDEEGLEIIRHSCAHLLGHAIKQLWPHTKMAIGPVIDNGFYYDVDLDRTLTQEDVEALEKRMHELAEKNYDVIKKKVSWHEARETFANRGESYKVSILDENIAHDDKPGLYFHEEYVDMCRGPHVPNMRFCHHFKLMKTAGAYWRGDSNNKMLQRIYGTAWADKKALNAYLQRLEEAAKRDHRKIGKQLDLYHMQEEAPGMVFWHNDGWTIFRELEVFVRSKLKEYQYQEVKGPFMMDRVLWEKTGHWDNYKDAMFTTSSENREYCIKPMNCPGHVQIFNQGLKSYRDLPLRMAEFGSCHRNEPSGSLHGLMRVRGFTQDDAHIFCTEEQIRDEVNGCIRLVYDMYSTFGFEKIVVKLSTRPEKRIGSDEMWDRAEADLAVALEENNIPFEYQLGEGAFYGPKIEFTLYDCLDRAWQCGTVQLDFSLPSRLSASYVGEDNERKVPVMIHRAILGSMERFIGILTEEFAGFFPTWLAPVQVVIMNITDSQSEYVNELTQKLSNAGIRVKADLRNEKIGFKIREHTLRRVPYMLVCGDKEVESGKVAVRTRRGKDLGSMDVNEVIEKLQQEIRSRSLKQLEE</sequence>
<name>SYT_ECOL6</name>
<gene>
    <name evidence="1" type="primary">thrS</name>
    <name type="ordered locus">c2116</name>
</gene>